<proteinExistence type="inferred from homology"/>
<name>KDSB_RHIJ3</name>
<dbReference type="EC" id="2.7.7.38" evidence="1"/>
<dbReference type="EMBL" id="AM236080">
    <property type="protein sequence ID" value="CAK05629.1"/>
    <property type="molecule type" value="Genomic_DNA"/>
</dbReference>
<dbReference type="RefSeq" id="WP_011649959.1">
    <property type="nucleotide sequence ID" value="NC_008380.1"/>
</dbReference>
<dbReference type="SMR" id="Q1MN23"/>
<dbReference type="EnsemblBacteria" id="CAK05629">
    <property type="protein sequence ID" value="CAK05629"/>
    <property type="gene ID" value="RL0140"/>
</dbReference>
<dbReference type="KEGG" id="rle:RL0140"/>
<dbReference type="eggNOG" id="COG1212">
    <property type="taxonomic scope" value="Bacteria"/>
</dbReference>
<dbReference type="HOGENOM" id="CLU_065038_0_1_5"/>
<dbReference type="UniPathway" id="UPA00030"/>
<dbReference type="UniPathway" id="UPA00358">
    <property type="reaction ID" value="UER00476"/>
</dbReference>
<dbReference type="Proteomes" id="UP000006575">
    <property type="component" value="Chromosome"/>
</dbReference>
<dbReference type="GO" id="GO:0005829">
    <property type="term" value="C:cytosol"/>
    <property type="evidence" value="ECO:0007669"/>
    <property type="project" value="TreeGrafter"/>
</dbReference>
<dbReference type="GO" id="GO:0008690">
    <property type="term" value="F:3-deoxy-manno-octulosonate cytidylyltransferase activity"/>
    <property type="evidence" value="ECO:0007669"/>
    <property type="project" value="UniProtKB-UniRule"/>
</dbReference>
<dbReference type="GO" id="GO:0033468">
    <property type="term" value="P:CMP-keto-3-deoxy-D-manno-octulosonic acid biosynthetic process"/>
    <property type="evidence" value="ECO:0007669"/>
    <property type="project" value="UniProtKB-UniRule"/>
</dbReference>
<dbReference type="GO" id="GO:0009103">
    <property type="term" value="P:lipopolysaccharide biosynthetic process"/>
    <property type="evidence" value="ECO:0007669"/>
    <property type="project" value="UniProtKB-UniRule"/>
</dbReference>
<dbReference type="CDD" id="cd02517">
    <property type="entry name" value="CMP-KDO-Synthetase"/>
    <property type="match status" value="1"/>
</dbReference>
<dbReference type="Gene3D" id="3.90.550.10">
    <property type="entry name" value="Spore Coat Polysaccharide Biosynthesis Protein SpsA, Chain A"/>
    <property type="match status" value="1"/>
</dbReference>
<dbReference type="HAMAP" id="MF_00057">
    <property type="entry name" value="KdsB"/>
    <property type="match status" value="1"/>
</dbReference>
<dbReference type="InterPro" id="IPR003329">
    <property type="entry name" value="Cytidylyl_trans"/>
</dbReference>
<dbReference type="InterPro" id="IPR004528">
    <property type="entry name" value="KdsB"/>
</dbReference>
<dbReference type="InterPro" id="IPR029044">
    <property type="entry name" value="Nucleotide-diphossugar_trans"/>
</dbReference>
<dbReference type="NCBIfam" id="TIGR00466">
    <property type="entry name" value="kdsB"/>
    <property type="match status" value="1"/>
</dbReference>
<dbReference type="NCBIfam" id="NF003948">
    <property type="entry name" value="PRK05450.1-1"/>
    <property type="match status" value="1"/>
</dbReference>
<dbReference type="NCBIfam" id="NF003952">
    <property type="entry name" value="PRK05450.1-5"/>
    <property type="match status" value="1"/>
</dbReference>
<dbReference type="PANTHER" id="PTHR42866">
    <property type="entry name" value="3-DEOXY-MANNO-OCTULOSONATE CYTIDYLYLTRANSFERASE"/>
    <property type="match status" value="1"/>
</dbReference>
<dbReference type="PANTHER" id="PTHR42866:SF2">
    <property type="entry name" value="3-DEOXY-MANNO-OCTULOSONATE CYTIDYLYLTRANSFERASE, MITOCHONDRIAL"/>
    <property type="match status" value="1"/>
</dbReference>
<dbReference type="Pfam" id="PF02348">
    <property type="entry name" value="CTP_transf_3"/>
    <property type="match status" value="1"/>
</dbReference>
<dbReference type="SUPFAM" id="SSF53448">
    <property type="entry name" value="Nucleotide-diphospho-sugar transferases"/>
    <property type="match status" value="1"/>
</dbReference>
<gene>
    <name evidence="1" type="primary">kdsB</name>
    <name type="ordered locus">RL0140</name>
</gene>
<reference key="1">
    <citation type="journal article" date="2006" name="Genome Biol.">
        <title>The genome of Rhizobium leguminosarum has recognizable core and accessory components.</title>
        <authorList>
            <person name="Young J.P.W."/>
            <person name="Crossman L.C."/>
            <person name="Johnston A.W.B."/>
            <person name="Thomson N.R."/>
            <person name="Ghazoui Z.F."/>
            <person name="Hull K.H."/>
            <person name="Wexler M."/>
            <person name="Curson A.R.J."/>
            <person name="Todd J.D."/>
            <person name="Poole P.S."/>
            <person name="Mauchline T.H."/>
            <person name="East A.K."/>
            <person name="Quail M.A."/>
            <person name="Churcher C."/>
            <person name="Arrowsmith C."/>
            <person name="Cherevach I."/>
            <person name="Chillingworth T."/>
            <person name="Clarke K."/>
            <person name="Cronin A."/>
            <person name="Davis P."/>
            <person name="Fraser A."/>
            <person name="Hance Z."/>
            <person name="Hauser H."/>
            <person name="Jagels K."/>
            <person name="Moule S."/>
            <person name="Mungall K."/>
            <person name="Norbertczak H."/>
            <person name="Rabbinowitsch E."/>
            <person name="Sanders M."/>
            <person name="Simmonds M."/>
            <person name="Whitehead S."/>
            <person name="Parkhill J."/>
        </authorList>
    </citation>
    <scope>NUCLEOTIDE SEQUENCE [LARGE SCALE GENOMIC DNA]</scope>
    <source>
        <strain>DSM 114642 / LMG 32736 / 3841</strain>
    </source>
</reference>
<organism>
    <name type="scientific">Rhizobium johnstonii (strain DSM 114642 / LMG 32736 / 3841)</name>
    <name type="common">Rhizobium leguminosarum bv. viciae</name>
    <dbReference type="NCBI Taxonomy" id="216596"/>
    <lineage>
        <taxon>Bacteria</taxon>
        <taxon>Pseudomonadati</taxon>
        <taxon>Pseudomonadota</taxon>
        <taxon>Alphaproteobacteria</taxon>
        <taxon>Hyphomicrobiales</taxon>
        <taxon>Rhizobiaceae</taxon>
        <taxon>Rhizobium/Agrobacterium group</taxon>
        <taxon>Rhizobium</taxon>
        <taxon>Rhizobium johnstonii</taxon>
    </lineage>
</organism>
<comment type="function">
    <text evidence="1">Activates KDO (a required 8-carbon sugar) for incorporation into bacterial lipopolysaccharide in Gram-negative bacteria.</text>
</comment>
<comment type="catalytic activity">
    <reaction evidence="1">
        <text>3-deoxy-alpha-D-manno-oct-2-ulosonate + CTP = CMP-3-deoxy-beta-D-manno-octulosonate + diphosphate</text>
        <dbReference type="Rhea" id="RHEA:23448"/>
        <dbReference type="ChEBI" id="CHEBI:33019"/>
        <dbReference type="ChEBI" id="CHEBI:37563"/>
        <dbReference type="ChEBI" id="CHEBI:85986"/>
        <dbReference type="ChEBI" id="CHEBI:85987"/>
        <dbReference type="EC" id="2.7.7.38"/>
    </reaction>
</comment>
<comment type="pathway">
    <text evidence="1">Nucleotide-sugar biosynthesis; CMP-3-deoxy-D-manno-octulosonate biosynthesis; CMP-3-deoxy-D-manno-octulosonate from 3-deoxy-D-manno-octulosonate and CTP: step 1/1.</text>
</comment>
<comment type="pathway">
    <text evidence="1">Bacterial outer membrane biogenesis; lipopolysaccharide biosynthesis.</text>
</comment>
<comment type="subcellular location">
    <subcellularLocation>
        <location evidence="1">Cytoplasm</location>
    </subcellularLocation>
</comment>
<comment type="similarity">
    <text evidence="1">Belongs to the KdsB family.</text>
</comment>
<evidence type="ECO:0000255" key="1">
    <source>
        <dbReference type="HAMAP-Rule" id="MF_00057"/>
    </source>
</evidence>
<protein>
    <recommendedName>
        <fullName evidence="1">3-deoxy-manno-octulosonate cytidylyltransferase</fullName>
        <ecNumber evidence="1">2.7.7.38</ecNumber>
    </recommendedName>
    <alternativeName>
        <fullName evidence="1">CMP-2-keto-3-deoxyoctulosonic acid synthase</fullName>
        <shortName evidence="1">CKS</shortName>
        <shortName evidence="1">CMP-KDO synthase</shortName>
    </alternativeName>
</protein>
<accession>Q1MN23</accession>
<sequence>MSDSNLDGVLVLIPARMASTRLPGKPLADICGLPMIVQVAMRAREAAIGRVVVAVDETRVFDAVAAAGFEVVMTRVDHQSGSDRIFEALTKVDPEGKAKIIVNIQGDLPTIDPETVRAALRPLENEAVDIGTLTTEIDNEEDKTAPHIVKIIGSPISGNRLHALYFTRATAPYGQGPLYHHIGLYAYRRAALERFVSLGPSTLEKRESLEQLRALEAGMRIDAEVVDTVPLGVDTPADLEKARRILSAKSN</sequence>
<keyword id="KW-0963">Cytoplasm</keyword>
<keyword id="KW-0448">Lipopolysaccharide biosynthesis</keyword>
<keyword id="KW-0548">Nucleotidyltransferase</keyword>
<keyword id="KW-0808">Transferase</keyword>
<feature type="chain" id="PRO_0000370132" description="3-deoxy-manno-octulosonate cytidylyltransferase">
    <location>
        <begin position="1"/>
        <end position="251"/>
    </location>
</feature>